<proteinExistence type="evidence at protein level"/>
<name>MNT2_YEAST</name>
<evidence type="ECO:0000255" key="1"/>
<evidence type="ECO:0000269" key="2">
    <source>
    </source>
</evidence>
<evidence type="ECO:0000305" key="3"/>
<comment type="function">
    <text>Mannosyltransferase involved in adding the 4th and 5th mannose residues of O-linked glycans.</text>
</comment>
<comment type="pathway">
    <text>Protein modification; protein glycosylation.</text>
</comment>
<comment type="subcellular location">
    <subcellularLocation>
        <location evidence="3">Golgi apparatus membrane</location>
        <topology evidence="3">Single-pass type II membrane protein</topology>
    </subcellularLocation>
</comment>
<comment type="miscellaneous">
    <text evidence="2">Present with 1170 molecules/cell in log phase SD medium.</text>
</comment>
<comment type="similarity">
    <text evidence="3">Belongs to the MNN1/MNT family.</text>
</comment>
<gene>
    <name type="primary">MNT2</name>
    <name type="ordered locus">YGL257C</name>
    <name type="ORF">NRD558</name>
</gene>
<accession>P53059</accession>
<accession>D6VV78</accession>
<protein>
    <recommendedName>
        <fullName>Alpha-1,3-mannosyltransferase MNT2</fullName>
        <ecNumber>2.4.1.-</ecNumber>
    </recommendedName>
</protein>
<keyword id="KW-0325">Glycoprotein</keyword>
<keyword id="KW-0328">Glycosyltransferase</keyword>
<keyword id="KW-0333">Golgi apparatus</keyword>
<keyword id="KW-0472">Membrane</keyword>
<keyword id="KW-1185">Reference proteome</keyword>
<keyword id="KW-0735">Signal-anchor</keyword>
<keyword id="KW-0808">Transferase</keyword>
<keyword id="KW-0812">Transmembrane</keyword>
<keyword id="KW-1133">Transmembrane helix</keyword>
<organism>
    <name type="scientific">Saccharomyces cerevisiae (strain ATCC 204508 / S288c)</name>
    <name type="common">Baker's yeast</name>
    <dbReference type="NCBI Taxonomy" id="559292"/>
    <lineage>
        <taxon>Eukaryota</taxon>
        <taxon>Fungi</taxon>
        <taxon>Dikarya</taxon>
        <taxon>Ascomycota</taxon>
        <taxon>Saccharomycotina</taxon>
        <taxon>Saccharomycetes</taxon>
        <taxon>Saccharomycetales</taxon>
        <taxon>Saccharomycetaceae</taxon>
        <taxon>Saccharomyces</taxon>
    </lineage>
</organism>
<dbReference type="EC" id="2.4.1.-"/>
<dbReference type="EMBL" id="X94357">
    <property type="protein sequence ID" value="CAA64130.1"/>
    <property type="molecule type" value="Genomic_DNA"/>
</dbReference>
<dbReference type="EMBL" id="Z72779">
    <property type="protein sequence ID" value="CAA96977.1"/>
    <property type="molecule type" value="Genomic_DNA"/>
</dbReference>
<dbReference type="EMBL" id="BK006941">
    <property type="protein sequence ID" value="DAA07862.1"/>
    <property type="molecule type" value="Genomic_DNA"/>
</dbReference>
<dbReference type="PIR" id="S61604">
    <property type="entry name" value="S61604"/>
</dbReference>
<dbReference type="RefSeq" id="NP_011257.1">
    <property type="nucleotide sequence ID" value="NM_001181123.1"/>
</dbReference>
<dbReference type="SMR" id="P53059"/>
<dbReference type="BioGRID" id="33022">
    <property type="interactions" value="90"/>
</dbReference>
<dbReference type="FunCoup" id="P53059">
    <property type="interactions" value="33"/>
</dbReference>
<dbReference type="STRING" id="4932.YGL257C"/>
<dbReference type="CAZy" id="GT71">
    <property type="family name" value="Glycosyltransferase Family 71"/>
</dbReference>
<dbReference type="GlyCosmos" id="P53059">
    <property type="glycosylation" value="1 site, No reported glycans"/>
</dbReference>
<dbReference type="GlyGen" id="P53059">
    <property type="glycosylation" value="1 site"/>
</dbReference>
<dbReference type="PaxDb" id="4932-YGL257C"/>
<dbReference type="PeptideAtlas" id="P53059"/>
<dbReference type="EnsemblFungi" id="YGL257C_mRNA">
    <property type="protein sequence ID" value="YGL257C"/>
    <property type="gene ID" value="YGL257C"/>
</dbReference>
<dbReference type="GeneID" id="852635"/>
<dbReference type="KEGG" id="sce:YGL257C"/>
<dbReference type="AGR" id="SGD:S000003226"/>
<dbReference type="SGD" id="S000003226">
    <property type="gene designation" value="MNT2"/>
</dbReference>
<dbReference type="VEuPathDB" id="FungiDB:YGL257C"/>
<dbReference type="eggNOG" id="ENOG502RZ48">
    <property type="taxonomic scope" value="Eukaryota"/>
</dbReference>
<dbReference type="GeneTree" id="ENSGT00940000176340"/>
<dbReference type="HOGENOM" id="CLU_015387_0_1_1"/>
<dbReference type="InParanoid" id="P53059"/>
<dbReference type="OMA" id="CEMYTIC"/>
<dbReference type="OrthoDB" id="430354at2759"/>
<dbReference type="BioCyc" id="MetaCyc:G3O-30725-MONOMER"/>
<dbReference type="BioCyc" id="YEAST:G3O-30725-MONOMER"/>
<dbReference type="UniPathway" id="UPA00378"/>
<dbReference type="BioGRID-ORCS" id="852635">
    <property type="hits" value="0 hits in 10 CRISPR screens"/>
</dbReference>
<dbReference type="PRO" id="PR:P53059"/>
<dbReference type="Proteomes" id="UP000002311">
    <property type="component" value="Chromosome VII"/>
</dbReference>
<dbReference type="RNAct" id="P53059">
    <property type="molecule type" value="protein"/>
</dbReference>
<dbReference type="GO" id="GO:0071944">
    <property type="term" value="C:cell periphery"/>
    <property type="evidence" value="ECO:0007005"/>
    <property type="project" value="SGD"/>
</dbReference>
<dbReference type="GO" id="GO:0000329">
    <property type="term" value="C:fungal-type vacuole membrane"/>
    <property type="evidence" value="ECO:0007005"/>
    <property type="project" value="SGD"/>
</dbReference>
<dbReference type="GO" id="GO:0005794">
    <property type="term" value="C:Golgi apparatus"/>
    <property type="evidence" value="ECO:0000314"/>
    <property type="project" value="SGD"/>
</dbReference>
<dbReference type="GO" id="GO:0000139">
    <property type="term" value="C:Golgi membrane"/>
    <property type="evidence" value="ECO:0007669"/>
    <property type="project" value="UniProtKB-SubCell"/>
</dbReference>
<dbReference type="GO" id="GO:0000033">
    <property type="term" value="F:alpha-1,3-mannosyltransferase activity"/>
    <property type="evidence" value="ECO:0000315"/>
    <property type="project" value="SGD"/>
</dbReference>
<dbReference type="GO" id="GO:0006493">
    <property type="term" value="P:protein O-linked glycosylation"/>
    <property type="evidence" value="ECO:0000315"/>
    <property type="project" value="SGD"/>
</dbReference>
<dbReference type="InterPro" id="IPR022751">
    <property type="entry name" value="Alpha_mannosyltransferase"/>
</dbReference>
<dbReference type="InterPro" id="IPR029044">
    <property type="entry name" value="Nucleotide-diphossugar_trans"/>
</dbReference>
<dbReference type="PANTHER" id="PTHR31392">
    <property type="entry name" value="ALPHA-1,3-MANNOSYLTRANSFERASE MNN1-RELATED"/>
    <property type="match status" value="1"/>
</dbReference>
<dbReference type="PANTHER" id="PTHR31392:SF1">
    <property type="entry name" value="ALPHA-1,3-MANNOSYLTRANSFERASE MNN1-RELATED"/>
    <property type="match status" value="1"/>
</dbReference>
<dbReference type="Pfam" id="PF11051">
    <property type="entry name" value="Mannosyl_trans3"/>
    <property type="match status" value="1"/>
</dbReference>
<dbReference type="SUPFAM" id="SSF53448">
    <property type="entry name" value="Nucleotide-diphospho-sugar transferases"/>
    <property type="match status" value="1"/>
</dbReference>
<reference key="1">
    <citation type="journal article" date="1996" name="Yeast">
        <title>Sequence of a 39,411 bp DNA fragment covering the left end of chromosome VII of Saccharomyces cerevisiae.</title>
        <authorList>
            <person name="Coissac E."/>
            <person name="Maillier E."/>
            <person name="Robineau S."/>
            <person name="Netter P."/>
        </authorList>
    </citation>
    <scope>NUCLEOTIDE SEQUENCE [GENOMIC DNA]</scope>
    <source>
        <strain>ATCC 96604 / S288c / FY1679</strain>
    </source>
</reference>
<reference key="2">
    <citation type="journal article" date="1997" name="Nature">
        <title>The nucleotide sequence of Saccharomyces cerevisiae chromosome VII.</title>
        <authorList>
            <person name="Tettelin H."/>
            <person name="Agostoni-Carbone M.L."/>
            <person name="Albermann K."/>
            <person name="Albers M."/>
            <person name="Arroyo J."/>
            <person name="Backes U."/>
            <person name="Barreiros T."/>
            <person name="Bertani I."/>
            <person name="Bjourson A.J."/>
            <person name="Brueckner M."/>
            <person name="Bruschi C.V."/>
            <person name="Carignani G."/>
            <person name="Castagnoli L."/>
            <person name="Cerdan E."/>
            <person name="Clemente M.L."/>
            <person name="Coblenz A."/>
            <person name="Coglievina M."/>
            <person name="Coissac E."/>
            <person name="Defoor E."/>
            <person name="Del Bino S."/>
            <person name="Delius H."/>
            <person name="Delneri D."/>
            <person name="de Wergifosse P."/>
            <person name="Dujon B."/>
            <person name="Durand P."/>
            <person name="Entian K.-D."/>
            <person name="Eraso P."/>
            <person name="Escribano V."/>
            <person name="Fabiani L."/>
            <person name="Fartmann B."/>
            <person name="Feroli F."/>
            <person name="Feuermann M."/>
            <person name="Frontali L."/>
            <person name="Garcia-Gonzalez M."/>
            <person name="Garcia-Saez M.I."/>
            <person name="Goffeau A."/>
            <person name="Guerreiro P."/>
            <person name="Hani J."/>
            <person name="Hansen M."/>
            <person name="Hebling U."/>
            <person name="Hernandez K."/>
            <person name="Heumann K."/>
            <person name="Hilger F."/>
            <person name="Hofmann B."/>
            <person name="Indge K.J."/>
            <person name="James C.M."/>
            <person name="Klima R."/>
            <person name="Koetter P."/>
            <person name="Kramer B."/>
            <person name="Kramer W."/>
            <person name="Lauquin G."/>
            <person name="Leuther H."/>
            <person name="Louis E.J."/>
            <person name="Maillier E."/>
            <person name="Marconi A."/>
            <person name="Martegani E."/>
            <person name="Mazon M.J."/>
            <person name="Mazzoni C."/>
            <person name="McReynolds A.D.K."/>
            <person name="Melchioretto P."/>
            <person name="Mewes H.-W."/>
            <person name="Minenkova O."/>
            <person name="Mueller-Auer S."/>
            <person name="Nawrocki A."/>
            <person name="Netter P."/>
            <person name="Neu R."/>
            <person name="Nombela C."/>
            <person name="Oliver S.G."/>
            <person name="Panzeri L."/>
            <person name="Paoluzi S."/>
            <person name="Plevani P."/>
            <person name="Portetelle D."/>
            <person name="Portillo F."/>
            <person name="Potier S."/>
            <person name="Purnelle B."/>
            <person name="Rieger M."/>
            <person name="Riles L."/>
            <person name="Rinaldi T."/>
            <person name="Robben J."/>
            <person name="Rodrigues-Pousada C."/>
            <person name="Rodriguez-Belmonte E."/>
            <person name="Rodriguez-Torres A.M."/>
            <person name="Rose M."/>
            <person name="Ruzzi M."/>
            <person name="Saliola M."/>
            <person name="Sanchez-Perez M."/>
            <person name="Schaefer B."/>
            <person name="Schaefer M."/>
            <person name="Scharfe M."/>
            <person name="Schmidheini T."/>
            <person name="Schreer A."/>
            <person name="Skala J."/>
            <person name="Souciet J.-L."/>
            <person name="Steensma H.Y."/>
            <person name="Talla E."/>
            <person name="Thierry A."/>
            <person name="Vandenbol M."/>
            <person name="van der Aart Q.J.M."/>
            <person name="Van Dyck L."/>
            <person name="Vanoni M."/>
            <person name="Verhasselt P."/>
            <person name="Voet M."/>
            <person name="Volckaert G."/>
            <person name="Wambutt R."/>
            <person name="Watson M.D."/>
            <person name="Weber N."/>
            <person name="Wedler E."/>
            <person name="Wedler H."/>
            <person name="Wipfli P."/>
            <person name="Wolf K."/>
            <person name="Wright L.F."/>
            <person name="Zaccaria P."/>
            <person name="Zimmermann M."/>
            <person name="Zollner A."/>
            <person name="Kleine K."/>
        </authorList>
    </citation>
    <scope>NUCLEOTIDE SEQUENCE [LARGE SCALE GENOMIC DNA]</scope>
    <source>
        <strain>ATCC 204508 / S288c</strain>
    </source>
</reference>
<reference key="3">
    <citation type="journal article" date="2014" name="G3 (Bethesda)">
        <title>The reference genome sequence of Saccharomyces cerevisiae: Then and now.</title>
        <authorList>
            <person name="Engel S.R."/>
            <person name="Dietrich F.S."/>
            <person name="Fisk D.G."/>
            <person name="Binkley G."/>
            <person name="Balakrishnan R."/>
            <person name="Costanzo M.C."/>
            <person name="Dwight S.S."/>
            <person name="Hitz B.C."/>
            <person name="Karra K."/>
            <person name="Nash R.S."/>
            <person name="Weng S."/>
            <person name="Wong E.D."/>
            <person name="Lloyd P."/>
            <person name="Skrzypek M.S."/>
            <person name="Miyasato S.R."/>
            <person name="Simison M."/>
            <person name="Cherry J.M."/>
        </authorList>
    </citation>
    <scope>GENOME REANNOTATION</scope>
    <source>
        <strain>ATCC 204508 / S288c</strain>
    </source>
</reference>
<reference key="4">
    <citation type="journal article" date="1999" name="Glycobiology">
        <title>Mnt2p and Mnt3p of Saccharomyces cerevisiae are members of the Mnn1p family of alpha-1,3-mannosyltransferases responsible for adding the terminal mannose residues of O-linked oligosaccharides.</title>
        <authorList>
            <person name="Romero P.A."/>
            <person name="Lussier M."/>
            <person name="Veronneau S."/>
            <person name="Sdicu A.-M."/>
            <person name="Herscovics A."/>
            <person name="Bussey H."/>
        </authorList>
    </citation>
    <scope>CHARACTERIZATION</scope>
</reference>
<reference key="5">
    <citation type="journal article" date="2003" name="Nature">
        <title>Global analysis of protein expression in yeast.</title>
        <authorList>
            <person name="Ghaemmaghami S."/>
            <person name="Huh W.-K."/>
            <person name="Bower K."/>
            <person name="Howson R.W."/>
            <person name="Belle A."/>
            <person name="Dephoure N."/>
            <person name="O'Shea E.K."/>
            <person name="Weissman J.S."/>
        </authorList>
    </citation>
    <scope>LEVEL OF PROTEIN EXPRESSION [LARGE SCALE ANALYSIS]</scope>
</reference>
<feature type="chain" id="PRO_0000080559" description="Alpha-1,3-mannosyltransferase MNT2">
    <location>
        <begin position="1"/>
        <end position="558"/>
    </location>
</feature>
<feature type="topological domain" description="Cytoplasmic" evidence="1">
    <location>
        <begin position="1"/>
        <end position="6"/>
    </location>
</feature>
<feature type="transmembrane region" description="Helical; Signal-anchor for type II membrane protein" evidence="1">
    <location>
        <begin position="7"/>
        <end position="27"/>
    </location>
</feature>
<feature type="topological domain" description="Lumenal" evidence="1">
    <location>
        <begin position="28"/>
        <end position="558"/>
    </location>
</feature>
<feature type="glycosylation site" description="N-linked (GlcNAc...) asparagine" evidence="1">
    <location>
        <position position="187"/>
    </location>
</feature>
<sequence length="558" mass="64853">MRRKNRLFILVVLLGIVLVVYYSQLNSLDLVEPVQSSSSGNGGCWSYYEGLTPGWLNDFYDVNQITPNPAKDVIELVTRIKIFFNCLQQVDGHNIQRLRDIEKKLFPYINFEKLETDESAFWHTTTRWNGEVYHASMLEFDPKNHQFLRSKPINFDTGLSFWENWLHTVTQSGSKGIVISASDVQLNETIRLLKVLRFIKNDYPIQIVHNADLSQDSMKSIIKYARSLDTAEYPAQELWFLNVHSLLNPKYSKKFTTYSNKWLALTFSSFEIPILMDSDTVPFVSIEKFYELEEFQKTGVLFFKDRVISDDLFESSELKILREIVYGCIGLDLEDESKIHEQVEDPVVAQVLENMFIKKYKHHLESGLVILHKGKHLFSMLTSIALQFSPIAEYFHGDKDFFWLGELLSNNRFTFHPVDASNIGQLGNVVSKESTGEFYQICSVQLSHTDRDGSLLWLNGGLNICKKTSWEYDYEHRQRLNDMFQNADELREYYASPVKLEGIIIPDTSISGWINSGECFLFNYCTLFKEGEFGKLIKFKEDEKLRLSQIVDIWNKDI</sequence>